<proteinExistence type="inferred from homology"/>
<name>Y1469_MYCSJ</name>
<sequence>MRPPARMPKLTRRSRVLIGVALAAVVLLLIGPRFIDTYVNWLWFGELGYRSVFTTVLFTRVVVFLVVSLLIGAIVFAGLALAYRTRPVFVPTAGPNDPIARYRTTVMARLRLFGFGVPAFIGILSGIVAQSYWVRIQLYLHGGEFGVTDPQFGLDLGFYAFDLPFYRLVLSYLFVATFLAFIANLLGHYLFGGIRLTGRNGALTRSARIQLVTLVGILILLKAFAYWLDRYELLSHTRGGKPFTGAGYTDINAVLPAKLILLAIAVICAVAVFSAIVLRDLRIPAIGVVLLLLSSLVVGAGWPLVVEQFSVKPNAAQKESEYISRSIAATRQAYGLTDEVVTYRDYPGNAPATAQQVAADRSTTSNIRVLDPNIVSPAFTQFQQGKNFYFFPEQLAMDRYRDADGNLRDYVVAARELNPDRLIDNQRDWINRHTVYTHGNGFIASPANTVRGIANDPNQNGGYPEFLASVVGANGNVVSPGPAPLDQPRIYFGPVIANTASDYAIVGENGTPREYDYENNVETRNYTYTGSGGVPIGNWLTRSLFAAKFAERNFLFSNVIGENSKILFNRDPADRVEAVAPWLTTDTTVYPAIVNKKIVWIVDGYTTLDNYPYSELTSLSSATADSNEVAVNRLALNKQVSYIRNSVKATVDAYDGTVTLYAQDETDPVLQAWMKVFPDTIKPKSEISPELQQHLRYPEDLFKVQRALLAKYHVDDPVTFFSTSDFWDVPLDPNPTASSFQPPYYIVAKDLAENNNSAAFQLTSAMNRFRRDFLAAYMSASSDPETYGKITVLTIPGQVNGPKLAFNAISTDTAVSQDLGVIGRDNQNRIRWGNLLTLPVGPGGLLYVAPVYASPGTSDAASTYPRLIRVAMFYNDQVGYGPTVRDALTDLFGAGADATATGPAPANLPDGQPAAQPPNGQQPAAQTPGNQAGRASTPPPAAIPSGPSGPQQLSEAKAAALQEVQEAMSGLQDAQRSGNFAEYGEALQRLDDAMNRYSEAR</sequence>
<keyword id="KW-1003">Cell membrane</keyword>
<keyword id="KW-0472">Membrane</keyword>
<keyword id="KW-0812">Transmembrane</keyword>
<keyword id="KW-1133">Transmembrane helix</keyword>
<comment type="subcellular location">
    <subcellularLocation>
        <location evidence="1">Cell membrane</location>
        <topology evidence="1">Multi-pass membrane protein</topology>
    </subcellularLocation>
</comment>
<comment type="similarity">
    <text evidence="1">Belongs to the UPF0182 family.</text>
</comment>
<organism>
    <name type="scientific">Mycobacterium sp. (strain JLS)</name>
    <dbReference type="NCBI Taxonomy" id="164757"/>
    <lineage>
        <taxon>Bacteria</taxon>
        <taxon>Bacillati</taxon>
        <taxon>Actinomycetota</taxon>
        <taxon>Actinomycetes</taxon>
        <taxon>Mycobacteriales</taxon>
        <taxon>Mycobacteriaceae</taxon>
        <taxon>Mycobacterium</taxon>
    </lineage>
</organism>
<evidence type="ECO:0000255" key="1">
    <source>
        <dbReference type="HAMAP-Rule" id="MF_01600"/>
    </source>
</evidence>
<evidence type="ECO:0000256" key="2">
    <source>
        <dbReference type="SAM" id="MobiDB-lite"/>
    </source>
</evidence>
<feature type="chain" id="PRO_5000228183" description="UPF0182 protein Mjls_1469">
    <location>
        <begin position="1"/>
        <end position="1001"/>
    </location>
</feature>
<feature type="transmembrane region" description="Helical" evidence="1">
    <location>
        <begin position="16"/>
        <end position="36"/>
    </location>
</feature>
<feature type="transmembrane region" description="Helical" evidence="1">
    <location>
        <begin position="61"/>
        <end position="81"/>
    </location>
</feature>
<feature type="transmembrane region" description="Helical" evidence="1">
    <location>
        <begin position="112"/>
        <end position="132"/>
    </location>
</feature>
<feature type="transmembrane region" description="Helical" evidence="1">
    <location>
        <begin position="174"/>
        <end position="194"/>
    </location>
</feature>
<feature type="transmembrane region" description="Helical" evidence="1">
    <location>
        <begin position="209"/>
        <end position="229"/>
    </location>
</feature>
<feature type="transmembrane region" description="Helical" evidence="1">
    <location>
        <begin position="258"/>
        <end position="278"/>
    </location>
</feature>
<feature type="transmembrane region" description="Helical" evidence="1">
    <location>
        <begin position="286"/>
        <end position="306"/>
    </location>
</feature>
<feature type="region of interest" description="Disordered" evidence="2">
    <location>
        <begin position="900"/>
        <end position="977"/>
    </location>
</feature>
<feature type="compositionally biased region" description="Low complexity" evidence="2">
    <location>
        <begin position="900"/>
        <end position="929"/>
    </location>
</feature>
<reference key="1">
    <citation type="submission" date="2007-02" db="EMBL/GenBank/DDBJ databases">
        <title>Complete sequence of Mycobacterium sp. JLS.</title>
        <authorList>
            <consortium name="US DOE Joint Genome Institute"/>
            <person name="Copeland A."/>
            <person name="Lucas S."/>
            <person name="Lapidus A."/>
            <person name="Barry K."/>
            <person name="Detter J.C."/>
            <person name="Glavina del Rio T."/>
            <person name="Hammon N."/>
            <person name="Israni S."/>
            <person name="Dalin E."/>
            <person name="Tice H."/>
            <person name="Pitluck S."/>
            <person name="Chain P."/>
            <person name="Malfatti S."/>
            <person name="Shin M."/>
            <person name="Vergez L."/>
            <person name="Schmutz J."/>
            <person name="Larimer F."/>
            <person name="Land M."/>
            <person name="Hauser L."/>
            <person name="Kyrpides N."/>
            <person name="Mikhailova N."/>
            <person name="Miller C.D."/>
            <person name="Anderson A.J."/>
            <person name="Sims R.C."/>
            <person name="Richardson P."/>
        </authorList>
    </citation>
    <scope>NUCLEOTIDE SEQUENCE [LARGE SCALE GENOMIC DNA]</scope>
    <source>
        <strain>JLS</strain>
    </source>
</reference>
<dbReference type="EMBL" id="CP000580">
    <property type="protein sequence ID" value="ABN97270.1"/>
    <property type="molecule type" value="Genomic_DNA"/>
</dbReference>
<dbReference type="SMR" id="A3PWJ3"/>
<dbReference type="KEGG" id="mjl:Mjls_1469"/>
<dbReference type="HOGENOM" id="CLU_007733_1_0_11"/>
<dbReference type="GO" id="GO:0005576">
    <property type="term" value="C:extracellular region"/>
    <property type="evidence" value="ECO:0007669"/>
    <property type="project" value="TreeGrafter"/>
</dbReference>
<dbReference type="GO" id="GO:0005886">
    <property type="term" value="C:plasma membrane"/>
    <property type="evidence" value="ECO:0007669"/>
    <property type="project" value="UniProtKB-SubCell"/>
</dbReference>
<dbReference type="HAMAP" id="MF_01600">
    <property type="entry name" value="UPF0182"/>
    <property type="match status" value="1"/>
</dbReference>
<dbReference type="InterPro" id="IPR005372">
    <property type="entry name" value="UPF0182"/>
</dbReference>
<dbReference type="NCBIfam" id="NF000825">
    <property type="entry name" value="PRK00068.1"/>
    <property type="match status" value="1"/>
</dbReference>
<dbReference type="NCBIfam" id="NF009097">
    <property type="entry name" value="PRK12438.1"/>
    <property type="match status" value="1"/>
</dbReference>
<dbReference type="PANTHER" id="PTHR39344">
    <property type="entry name" value="UPF0182 PROTEIN SLL1060"/>
    <property type="match status" value="1"/>
</dbReference>
<dbReference type="PANTHER" id="PTHR39344:SF1">
    <property type="entry name" value="UPF0182 PROTEIN SLL1060"/>
    <property type="match status" value="1"/>
</dbReference>
<dbReference type="Pfam" id="PF03699">
    <property type="entry name" value="UPF0182"/>
    <property type="match status" value="1"/>
</dbReference>
<gene>
    <name type="ordered locus">Mjls_1469</name>
</gene>
<protein>
    <recommendedName>
        <fullName evidence="1">UPF0182 protein Mjls_1469</fullName>
    </recommendedName>
</protein>
<accession>A3PWJ3</accession>